<sequence>MGQDLPLLLSAALGKKVNRPPVWMMRQAGRYMKIYRDLRERYPSFRERSENPELSYEISMQPFHAFKPDGVILFSDILTPLPGMGINFEIIESKGPIIEDPIRTLNQVENLRELNPSESLSFVGQVLSSLKKDVNNEATILGFVGAPWTLAAYVVEGKSSKNYSLIKSMAFNEPDLLHKLLDHFAKSIGEYLKYQIKSGAQVVQIFDSWAGQLSPQDYDMFAGPYQKKVVEIVKAEYPETPIILYISGSAGVLERMAKTGVDIISLDWTVDIEEACKRIPRGIGIQGNVDPGILFGNKKSIKERIDDTFNKIKDRKYILNLGHGILPGTPEENAQTFFEHGKKLTY</sequence>
<proteinExistence type="inferred from homology"/>
<gene>
    <name evidence="1" type="primary">hemE</name>
    <name type="ordered locus">A9601_06391</name>
</gene>
<comment type="function">
    <text evidence="1">Catalyzes the decarboxylation of four acetate groups of uroporphyrinogen-III to yield coproporphyrinogen-III.</text>
</comment>
<comment type="catalytic activity">
    <reaction evidence="1">
        <text>uroporphyrinogen III + 4 H(+) = coproporphyrinogen III + 4 CO2</text>
        <dbReference type="Rhea" id="RHEA:19865"/>
        <dbReference type="ChEBI" id="CHEBI:15378"/>
        <dbReference type="ChEBI" id="CHEBI:16526"/>
        <dbReference type="ChEBI" id="CHEBI:57308"/>
        <dbReference type="ChEBI" id="CHEBI:57309"/>
        <dbReference type="EC" id="4.1.1.37"/>
    </reaction>
</comment>
<comment type="pathway">
    <text evidence="1">Porphyrin-containing compound metabolism; protoporphyrin-IX biosynthesis; coproporphyrinogen-III from 5-aminolevulinate: step 4/4.</text>
</comment>
<comment type="subunit">
    <text evidence="1">Homodimer.</text>
</comment>
<comment type="subcellular location">
    <subcellularLocation>
        <location evidence="1">Cytoplasm</location>
    </subcellularLocation>
</comment>
<comment type="similarity">
    <text evidence="1">Belongs to the uroporphyrinogen decarboxylase family.</text>
</comment>
<protein>
    <recommendedName>
        <fullName evidence="1">Uroporphyrinogen decarboxylase</fullName>
        <shortName evidence="1">UPD</shortName>
        <shortName evidence="1">URO-D</shortName>
        <ecNumber evidence="1">4.1.1.37</ecNumber>
    </recommendedName>
</protein>
<name>DCUP_PROMS</name>
<keyword id="KW-0963">Cytoplasm</keyword>
<keyword id="KW-0210">Decarboxylase</keyword>
<keyword id="KW-0456">Lyase</keyword>
<keyword id="KW-0627">Porphyrin biosynthesis</keyword>
<accession>A2BQ64</accession>
<reference key="1">
    <citation type="journal article" date="2007" name="PLoS Genet.">
        <title>Patterns and implications of gene gain and loss in the evolution of Prochlorococcus.</title>
        <authorList>
            <person name="Kettler G.C."/>
            <person name="Martiny A.C."/>
            <person name="Huang K."/>
            <person name="Zucker J."/>
            <person name="Coleman M.L."/>
            <person name="Rodrigue S."/>
            <person name="Chen F."/>
            <person name="Lapidus A."/>
            <person name="Ferriera S."/>
            <person name="Johnson J."/>
            <person name="Steglich C."/>
            <person name="Church G.M."/>
            <person name="Richardson P."/>
            <person name="Chisholm S.W."/>
        </authorList>
    </citation>
    <scope>NUCLEOTIDE SEQUENCE [LARGE SCALE GENOMIC DNA]</scope>
    <source>
        <strain>AS9601</strain>
    </source>
</reference>
<evidence type="ECO:0000255" key="1">
    <source>
        <dbReference type="HAMAP-Rule" id="MF_00218"/>
    </source>
</evidence>
<organism>
    <name type="scientific">Prochlorococcus marinus (strain AS9601)</name>
    <dbReference type="NCBI Taxonomy" id="146891"/>
    <lineage>
        <taxon>Bacteria</taxon>
        <taxon>Bacillati</taxon>
        <taxon>Cyanobacteriota</taxon>
        <taxon>Cyanophyceae</taxon>
        <taxon>Synechococcales</taxon>
        <taxon>Prochlorococcaceae</taxon>
        <taxon>Prochlorococcus</taxon>
    </lineage>
</organism>
<feature type="chain" id="PRO_1000023941" description="Uroporphyrinogen decarboxylase">
    <location>
        <begin position="1"/>
        <end position="346"/>
    </location>
</feature>
<feature type="binding site" evidence="1">
    <location>
        <begin position="26"/>
        <end position="30"/>
    </location>
    <ligand>
        <name>substrate</name>
    </ligand>
</feature>
<feature type="binding site" evidence="1">
    <location>
        <position position="76"/>
    </location>
    <ligand>
        <name>substrate</name>
    </ligand>
</feature>
<feature type="binding site" evidence="1">
    <location>
        <position position="153"/>
    </location>
    <ligand>
        <name>substrate</name>
    </ligand>
</feature>
<feature type="binding site" evidence="1">
    <location>
        <position position="208"/>
    </location>
    <ligand>
        <name>substrate</name>
    </ligand>
</feature>
<feature type="binding site" evidence="1">
    <location>
        <position position="323"/>
    </location>
    <ligand>
        <name>substrate</name>
    </ligand>
</feature>
<feature type="site" description="Transition state stabilizer" evidence="1">
    <location>
        <position position="76"/>
    </location>
</feature>
<dbReference type="EC" id="4.1.1.37" evidence="1"/>
<dbReference type="EMBL" id="CP000551">
    <property type="protein sequence ID" value="ABM69925.1"/>
    <property type="molecule type" value="Genomic_DNA"/>
</dbReference>
<dbReference type="RefSeq" id="WP_011818087.1">
    <property type="nucleotide sequence ID" value="NC_008816.1"/>
</dbReference>
<dbReference type="SMR" id="A2BQ64"/>
<dbReference type="STRING" id="146891.A9601_06391"/>
<dbReference type="KEGG" id="pmb:A9601_06391"/>
<dbReference type="eggNOG" id="COG0407">
    <property type="taxonomic scope" value="Bacteria"/>
</dbReference>
<dbReference type="HOGENOM" id="CLU_040933_0_2_3"/>
<dbReference type="OrthoDB" id="9806656at2"/>
<dbReference type="UniPathway" id="UPA00251">
    <property type="reaction ID" value="UER00321"/>
</dbReference>
<dbReference type="Proteomes" id="UP000002590">
    <property type="component" value="Chromosome"/>
</dbReference>
<dbReference type="GO" id="GO:0005737">
    <property type="term" value="C:cytoplasm"/>
    <property type="evidence" value="ECO:0007669"/>
    <property type="project" value="UniProtKB-SubCell"/>
</dbReference>
<dbReference type="GO" id="GO:0004853">
    <property type="term" value="F:uroporphyrinogen decarboxylase activity"/>
    <property type="evidence" value="ECO:0007669"/>
    <property type="project" value="UniProtKB-UniRule"/>
</dbReference>
<dbReference type="GO" id="GO:0006782">
    <property type="term" value="P:protoporphyrinogen IX biosynthetic process"/>
    <property type="evidence" value="ECO:0007669"/>
    <property type="project" value="UniProtKB-UniRule"/>
</dbReference>
<dbReference type="CDD" id="cd00717">
    <property type="entry name" value="URO-D"/>
    <property type="match status" value="1"/>
</dbReference>
<dbReference type="FunFam" id="3.20.20.210:FF:000006">
    <property type="entry name" value="Uroporphyrinogen decarboxylase"/>
    <property type="match status" value="1"/>
</dbReference>
<dbReference type="Gene3D" id="3.20.20.210">
    <property type="match status" value="1"/>
</dbReference>
<dbReference type="HAMAP" id="MF_00218">
    <property type="entry name" value="URO_D"/>
    <property type="match status" value="1"/>
</dbReference>
<dbReference type="InterPro" id="IPR038071">
    <property type="entry name" value="UROD/MetE-like_sf"/>
</dbReference>
<dbReference type="InterPro" id="IPR006361">
    <property type="entry name" value="Uroporphyrinogen_deCO2ase_HemE"/>
</dbReference>
<dbReference type="InterPro" id="IPR000257">
    <property type="entry name" value="Uroporphyrinogen_deCOase"/>
</dbReference>
<dbReference type="NCBIfam" id="TIGR01464">
    <property type="entry name" value="hemE"/>
    <property type="match status" value="1"/>
</dbReference>
<dbReference type="PANTHER" id="PTHR21091">
    <property type="entry name" value="METHYLTETRAHYDROFOLATE:HOMOCYSTEINE METHYLTRANSFERASE RELATED"/>
    <property type="match status" value="1"/>
</dbReference>
<dbReference type="PANTHER" id="PTHR21091:SF169">
    <property type="entry name" value="UROPORPHYRINOGEN DECARBOXYLASE"/>
    <property type="match status" value="1"/>
</dbReference>
<dbReference type="Pfam" id="PF01208">
    <property type="entry name" value="URO-D"/>
    <property type="match status" value="1"/>
</dbReference>
<dbReference type="SUPFAM" id="SSF51726">
    <property type="entry name" value="UROD/MetE-like"/>
    <property type="match status" value="1"/>
</dbReference>
<dbReference type="PROSITE" id="PS00906">
    <property type="entry name" value="UROD_1"/>
    <property type="match status" value="1"/>
</dbReference>
<dbReference type="PROSITE" id="PS00907">
    <property type="entry name" value="UROD_2"/>
    <property type="match status" value="1"/>
</dbReference>